<dbReference type="EMBL" id="AC005312">
    <property type="protein sequence ID" value="AAC78514.1"/>
    <property type="molecule type" value="Genomic_DNA"/>
</dbReference>
<dbReference type="EMBL" id="CP002685">
    <property type="protein sequence ID" value="AEC05565.1"/>
    <property type="molecule type" value="Genomic_DNA"/>
</dbReference>
<dbReference type="PIR" id="C84435">
    <property type="entry name" value="C84435"/>
</dbReference>
<dbReference type="SMR" id="Q9ZVR0"/>
<dbReference type="FunCoup" id="Q9ZVR0">
    <property type="interactions" value="13"/>
</dbReference>
<dbReference type="STRING" id="3702.Q9ZVR0"/>
<dbReference type="PaxDb" id="3702-AT2G02310.1"/>
<dbReference type="EnsemblPlants" id="AT2G02310.1">
    <property type="protein sequence ID" value="AT2G02310.1"/>
    <property type="gene ID" value="AT2G02310"/>
</dbReference>
<dbReference type="GeneID" id="814762"/>
<dbReference type="Gramene" id="AT2G02310.1">
    <property type="protein sequence ID" value="AT2G02310.1"/>
    <property type="gene ID" value="AT2G02310"/>
</dbReference>
<dbReference type="KEGG" id="ath:AT2G02310"/>
<dbReference type="Araport" id="AT2G02310"/>
<dbReference type="TAIR" id="AT2G02310">
    <property type="gene designation" value="PP2-B6"/>
</dbReference>
<dbReference type="eggNOG" id="ENOG502QRA4">
    <property type="taxonomic scope" value="Eukaryota"/>
</dbReference>
<dbReference type="HOGENOM" id="CLU_050973_0_0_1"/>
<dbReference type="InParanoid" id="Q9ZVR0"/>
<dbReference type="OMA" id="FICFDES"/>
<dbReference type="OrthoDB" id="1918565at2759"/>
<dbReference type="PhylomeDB" id="Q9ZVR0"/>
<dbReference type="PRO" id="PR:Q9ZVR0"/>
<dbReference type="Proteomes" id="UP000006548">
    <property type="component" value="Chromosome 2"/>
</dbReference>
<dbReference type="ExpressionAtlas" id="Q9ZVR0">
    <property type="expression patterns" value="baseline and differential"/>
</dbReference>
<dbReference type="GO" id="GO:0030246">
    <property type="term" value="F:carbohydrate binding"/>
    <property type="evidence" value="ECO:0000250"/>
    <property type="project" value="TAIR"/>
</dbReference>
<dbReference type="CDD" id="cd22162">
    <property type="entry name" value="F-box_AtSKIP3-like"/>
    <property type="match status" value="1"/>
</dbReference>
<dbReference type="FunFam" id="1.20.1280.50:FF:000112">
    <property type="entry name" value="F-box protein PP2-B1"/>
    <property type="match status" value="1"/>
</dbReference>
<dbReference type="Gene3D" id="1.20.1280.50">
    <property type="match status" value="1"/>
</dbReference>
<dbReference type="InterPro" id="IPR036047">
    <property type="entry name" value="F-box-like_dom_sf"/>
</dbReference>
<dbReference type="InterPro" id="IPR001810">
    <property type="entry name" value="F-box_dom"/>
</dbReference>
<dbReference type="InterPro" id="IPR025886">
    <property type="entry name" value="PP2-like"/>
</dbReference>
<dbReference type="PANTHER" id="PTHR32278">
    <property type="entry name" value="F-BOX DOMAIN-CONTAINING PROTEIN"/>
    <property type="match status" value="1"/>
</dbReference>
<dbReference type="PANTHER" id="PTHR32278:SF57">
    <property type="entry name" value="F-BOX PROTEIN PP2-B2-RELATED"/>
    <property type="match status" value="1"/>
</dbReference>
<dbReference type="Pfam" id="PF00646">
    <property type="entry name" value="F-box"/>
    <property type="match status" value="1"/>
</dbReference>
<dbReference type="Pfam" id="PF14299">
    <property type="entry name" value="PP2"/>
    <property type="match status" value="1"/>
</dbReference>
<dbReference type="SMART" id="SM00256">
    <property type="entry name" value="FBOX"/>
    <property type="match status" value="1"/>
</dbReference>
<dbReference type="SUPFAM" id="SSF81383">
    <property type="entry name" value="F-box domain"/>
    <property type="match status" value="1"/>
</dbReference>
<dbReference type="PROSITE" id="PS50181">
    <property type="entry name" value="FBOX"/>
    <property type="match status" value="1"/>
</dbReference>
<gene>
    <name type="primary">PP2B6</name>
    <name type="ordered locus">At2g02310</name>
    <name type="ORF">T16F16.10</name>
</gene>
<reference key="1">
    <citation type="journal article" date="1999" name="Nature">
        <title>Sequence and analysis of chromosome 2 of the plant Arabidopsis thaliana.</title>
        <authorList>
            <person name="Lin X."/>
            <person name="Kaul S."/>
            <person name="Rounsley S.D."/>
            <person name="Shea T.P."/>
            <person name="Benito M.-I."/>
            <person name="Town C.D."/>
            <person name="Fujii C.Y."/>
            <person name="Mason T.M."/>
            <person name="Bowman C.L."/>
            <person name="Barnstead M.E."/>
            <person name="Feldblyum T.V."/>
            <person name="Buell C.R."/>
            <person name="Ketchum K.A."/>
            <person name="Lee J.J."/>
            <person name="Ronning C.M."/>
            <person name="Koo H.L."/>
            <person name="Moffat K.S."/>
            <person name="Cronin L.A."/>
            <person name="Shen M."/>
            <person name="Pai G."/>
            <person name="Van Aken S."/>
            <person name="Umayam L."/>
            <person name="Tallon L.J."/>
            <person name="Gill J.E."/>
            <person name="Adams M.D."/>
            <person name="Carrera A.J."/>
            <person name="Creasy T.H."/>
            <person name="Goodman H.M."/>
            <person name="Somerville C.R."/>
            <person name="Copenhaver G.P."/>
            <person name="Preuss D."/>
            <person name="Nierman W.C."/>
            <person name="White O."/>
            <person name="Eisen J.A."/>
            <person name="Salzberg S.L."/>
            <person name="Fraser C.M."/>
            <person name="Venter J.C."/>
        </authorList>
    </citation>
    <scope>NUCLEOTIDE SEQUENCE [LARGE SCALE GENOMIC DNA]</scope>
    <source>
        <strain>cv. Columbia</strain>
    </source>
</reference>
<reference key="2">
    <citation type="journal article" date="2017" name="Plant J.">
        <title>Araport11: a complete reannotation of the Arabidopsis thaliana reference genome.</title>
        <authorList>
            <person name="Cheng C.Y."/>
            <person name="Krishnakumar V."/>
            <person name="Chan A.P."/>
            <person name="Thibaud-Nissen F."/>
            <person name="Schobel S."/>
            <person name="Town C.D."/>
        </authorList>
    </citation>
    <scope>GENOME REANNOTATION</scope>
    <source>
        <strain>cv. Columbia</strain>
    </source>
</reference>
<reference key="3">
    <citation type="journal article" date="2003" name="Plant Physiol.">
        <title>Diversity of the superfamily of phloem lectins (phloem protein 2) in angiosperms.</title>
        <authorList>
            <person name="Dinant S."/>
            <person name="Clark A.M."/>
            <person name="Zhu Y."/>
            <person name="Vilaine F."/>
            <person name="Palauqui J.-C."/>
            <person name="Kusiak C."/>
            <person name="Thompson G.A."/>
        </authorList>
    </citation>
    <scope>GENE FAMILY</scope>
    <scope>NOMENCLATURE</scope>
</reference>
<feature type="chain" id="PRO_0000272215" description="Putative F-box protein PP2-B6">
    <location>
        <begin position="1"/>
        <end position="307"/>
    </location>
</feature>
<feature type="domain" description="F-box" evidence="1">
    <location>
        <begin position="42"/>
        <end position="88"/>
    </location>
</feature>
<sequence>MGQKLGVDSRQKIRQVLGSSSKVQKHDVESIGGGGGEIVPGHSPFDDLPEDCISNIISFTSPRDVCVSASVSKSFAHAVQCDSIWEKFLPSEYESLIPPWRVFSSKKDLYFTLCYDPVLVEDGKKSFWLETASGKKCVLLAAKELWITGGNNPEYWQWIELCESSFEKVPELLNNRSFQMGGSMSTQILSLGTHYSVYIVYKIKDERHGLRDLPIQVGVGFKGQEMPKQFICFDESTDKTKEWPKKKLMKSKKRGDGWMEAEIGDFFNDGGLMGFDEVEVSIVDVTSPNLKCGVMIEGIEFRPKDCQ</sequence>
<evidence type="ECO:0000255" key="1">
    <source>
        <dbReference type="PROSITE-ProRule" id="PRU00080"/>
    </source>
</evidence>
<protein>
    <recommendedName>
        <fullName>Putative F-box protein PP2-B6</fullName>
    </recommendedName>
    <alternativeName>
        <fullName>Protein PHLOEM PROTEIN 2-LIKE B6</fullName>
        <shortName>AtPP2-B6</shortName>
    </alternativeName>
</protein>
<keyword id="KW-1185">Reference proteome</keyword>
<accession>Q9ZVR0</accession>
<name>PP2B6_ARATH</name>
<organism>
    <name type="scientific">Arabidopsis thaliana</name>
    <name type="common">Mouse-ear cress</name>
    <dbReference type="NCBI Taxonomy" id="3702"/>
    <lineage>
        <taxon>Eukaryota</taxon>
        <taxon>Viridiplantae</taxon>
        <taxon>Streptophyta</taxon>
        <taxon>Embryophyta</taxon>
        <taxon>Tracheophyta</taxon>
        <taxon>Spermatophyta</taxon>
        <taxon>Magnoliopsida</taxon>
        <taxon>eudicotyledons</taxon>
        <taxon>Gunneridae</taxon>
        <taxon>Pentapetalae</taxon>
        <taxon>rosids</taxon>
        <taxon>malvids</taxon>
        <taxon>Brassicales</taxon>
        <taxon>Brassicaceae</taxon>
        <taxon>Camelineae</taxon>
        <taxon>Arabidopsis</taxon>
    </lineage>
</organism>
<proteinExistence type="predicted"/>